<keyword id="KW-0067">ATP-binding</keyword>
<keyword id="KW-0963">Cytoplasm</keyword>
<keyword id="KW-0227">DNA damage</keyword>
<keyword id="KW-0233">DNA recombination</keyword>
<keyword id="KW-0234">DNA repair</keyword>
<keyword id="KW-0238">DNA-binding</keyword>
<keyword id="KW-0547">Nucleotide-binding</keyword>
<keyword id="KW-0742">SOS response</keyword>
<proteinExistence type="inferred from homology"/>
<dbReference type="EMBL" id="CP000450">
    <property type="protein sequence ID" value="ABI59058.1"/>
    <property type="molecule type" value="Genomic_DNA"/>
</dbReference>
<dbReference type="RefSeq" id="WP_011633883.1">
    <property type="nucleotide sequence ID" value="NC_008344.1"/>
</dbReference>
<dbReference type="SMR" id="Q0AHX4"/>
<dbReference type="STRING" id="335283.Neut_0789"/>
<dbReference type="KEGG" id="net:Neut_0789"/>
<dbReference type="eggNOG" id="COG0468">
    <property type="taxonomic scope" value="Bacteria"/>
</dbReference>
<dbReference type="HOGENOM" id="CLU_040469_3_2_4"/>
<dbReference type="OrthoDB" id="9776733at2"/>
<dbReference type="Proteomes" id="UP000001966">
    <property type="component" value="Chromosome"/>
</dbReference>
<dbReference type="GO" id="GO:0005829">
    <property type="term" value="C:cytosol"/>
    <property type="evidence" value="ECO:0007669"/>
    <property type="project" value="TreeGrafter"/>
</dbReference>
<dbReference type="GO" id="GO:0005524">
    <property type="term" value="F:ATP binding"/>
    <property type="evidence" value="ECO:0007669"/>
    <property type="project" value="UniProtKB-UniRule"/>
</dbReference>
<dbReference type="GO" id="GO:0016887">
    <property type="term" value="F:ATP hydrolysis activity"/>
    <property type="evidence" value="ECO:0007669"/>
    <property type="project" value="InterPro"/>
</dbReference>
<dbReference type="GO" id="GO:0140664">
    <property type="term" value="F:ATP-dependent DNA damage sensor activity"/>
    <property type="evidence" value="ECO:0007669"/>
    <property type="project" value="InterPro"/>
</dbReference>
<dbReference type="GO" id="GO:0003684">
    <property type="term" value="F:damaged DNA binding"/>
    <property type="evidence" value="ECO:0007669"/>
    <property type="project" value="UniProtKB-UniRule"/>
</dbReference>
<dbReference type="GO" id="GO:0003697">
    <property type="term" value="F:single-stranded DNA binding"/>
    <property type="evidence" value="ECO:0007669"/>
    <property type="project" value="UniProtKB-UniRule"/>
</dbReference>
<dbReference type="GO" id="GO:0006310">
    <property type="term" value="P:DNA recombination"/>
    <property type="evidence" value="ECO:0007669"/>
    <property type="project" value="UniProtKB-UniRule"/>
</dbReference>
<dbReference type="GO" id="GO:0006281">
    <property type="term" value="P:DNA repair"/>
    <property type="evidence" value="ECO:0007669"/>
    <property type="project" value="UniProtKB-UniRule"/>
</dbReference>
<dbReference type="GO" id="GO:0009432">
    <property type="term" value="P:SOS response"/>
    <property type="evidence" value="ECO:0007669"/>
    <property type="project" value="UniProtKB-UniRule"/>
</dbReference>
<dbReference type="CDD" id="cd00983">
    <property type="entry name" value="RecA"/>
    <property type="match status" value="1"/>
</dbReference>
<dbReference type="FunFam" id="3.40.50.300:FF:000087">
    <property type="entry name" value="Recombinase RecA"/>
    <property type="match status" value="1"/>
</dbReference>
<dbReference type="Gene3D" id="3.40.50.300">
    <property type="entry name" value="P-loop containing nucleotide triphosphate hydrolases"/>
    <property type="match status" value="1"/>
</dbReference>
<dbReference type="HAMAP" id="MF_00268">
    <property type="entry name" value="RecA"/>
    <property type="match status" value="1"/>
</dbReference>
<dbReference type="InterPro" id="IPR003593">
    <property type="entry name" value="AAA+_ATPase"/>
</dbReference>
<dbReference type="InterPro" id="IPR013765">
    <property type="entry name" value="DNA_recomb/repair_RecA"/>
</dbReference>
<dbReference type="InterPro" id="IPR020584">
    <property type="entry name" value="DNA_recomb/repair_RecA_CS"/>
</dbReference>
<dbReference type="InterPro" id="IPR027417">
    <property type="entry name" value="P-loop_NTPase"/>
</dbReference>
<dbReference type="InterPro" id="IPR049261">
    <property type="entry name" value="RecA-like_C"/>
</dbReference>
<dbReference type="InterPro" id="IPR049428">
    <property type="entry name" value="RecA-like_N"/>
</dbReference>
<dbReference type="InterPro" id="IPR020588">
    <property type="entry name" value="RecA_ATP-bd"/>
</dbReference>
<dbReference type="InterPro" id="IPR023400">
    <property type="entry name" value="RecA_C_sf"/>
</dbReference>
<dbReference type="InterPro" id="IPR020587">
    <property type="entry name" value="RecA_monomer-monomer_interface"/>
</dbReference>
<dbReference type="NCBIfam" id="TIGR02012">
    <property type="entry name" value="tigrfam_recA"/>
    <property type="match status" value="1"/>
</dbReference>
<dbReference type="PANTHER" id="PTHR45900:SF1">
    <property type="entry name" value="MITOCHONDRIAL DNA REPAIR PROTEIN RECA HOMOLOG-RELATED"/>
    <property type="match status" value="1"/>
</dbReference>
<dbReference type="PANTHER" id="PTHR45900">
    <property type="entry name" value="RECA"/>
    <property type="match status" value="1"/>
</dbReference>
<dbReference type="Pfam" id="PF00154">
    <property type="entry name" value="RecA"/>
    <property type="match status" value="1"/>
</dbReference>
<dbReference type="Pfam" id="PF21096">
    <property type="entry name" value="RecA_C"/>
    <property type="match status" value="1"/>
</dbReference>
<dbReference type="PRINTS" id="PR00142">
    <property type="entry name" value="RECA"/>
</dbReference>
<dbReference type="SMART" id="SM00382">
    <property type="entry name" value="AAA"/>
    <property type="match status" value="1"/>
</dbReference>
<dbReference type="SUPFAM" id="SSF52540">
    <property type="entry name" value="P-loop containing nucleoside triphosphate hydrolases"/>
    <property type="match status" value="1"/>
</dbReference>
<dbReference type="SUPFAM" id="SSF54752">
    <property type="entry name" value="RecA protein, C-terminal domain"/>
    <property type="match status" value="1"/>
</dbReference>
<dbReference type="PROSITE" id="PS00321">
    <property type="entry name" value="RECA_1"/>
    <property type="match status" value="1"/>
</dbReference>
<dbReference type="PROSITE" id="PS50162">
    <property type="entry name" value="RECA_2"/>
    <property type="match status" value="1"/>
</dbReference>
<dbReference type="PROSITE" id="PS50163">
    <property type="entry name" value="RECA_3"/>
    <property type="match status" value="1"/>
</dbReference>
<accession>Q0AHX4</accession>
<evidence type="ECO:0000255" key="1">
    <source>
        <dbReference type="HAMAP-Rule" id="MF_00268"/>
    </source>
</evidence>
<feature type="chain" id="PRO_1000047951" description="Protein RecA">
    <location>
        <begin position="1"/>
        <end position="343"/>
    </location>
</feature>
<feature type="binding site" evidence="1">
    <location>
        <begin position="66"/>
        <end position="73"/>
    </location>
    <ligand>
        <name>ATP</name>
        <dbReference type="ChEBI" id="CHEBI:30616"/>
    </ligand>
</feature>
<comment type="function">
    <text evidence="1">Can catalyze the hydrolysis of ATP in the presence of single-stranded DNA, the ATP-dependent uptake of single-stranded DNA by duplex DNA, and the ATP-dependent hybridization of homologous single-stranded DNAs. It interacts with LexA causing its activation and leading to its autocatalytic cleavage.</text>
</comment>
<comment type="subcellular location">
    <subcellularLocation>
        <location evidence="1">Cytoplasm</location>
    </subcellularLocation>
</comment>
<comment type="similarity">
    <text evidence="1">Belongs to the RecA family.</text>
</comment>
<protein>
    <recommendedName>
        <fullName evidence="1">Protein RecA</fullName>
    </recommendedName>
    <alternativeName>
        <fullName evidence="1">Recombinase A</fullName>
    </alternativeName>
</protein>
<organism>
    <name type="scientific">Nitrosomonas eutropha (strain DSM 101675 / C91 / Nm57)</name>
    <dbReference type="NCBI Taxonomy" id="335283"/>
    <lineage>
        <taxon>Bacteria</taxon>
        <taxon>Pseudomonadati</taxon>
        <taxon>Pseudomonadota</taxon>
        <taxon>Betaproteobacteria</taxon>
        <taxon>Nitrosomonadales</taxon>
        <taxon>Nitrosomonadaceae</taxon>
        <taxon>Nitrosomonas</taxon>
    </lineage>
</organism>
<reference key="1">
    <citation type="journal article" date="2007" name="Environ. Microbiol.">
        <title>Whole-genome analysis of the ammonia-oxidizing bacterium, Nitrosomonas eutropha C91: implications for niche adaptation.</title>
        <authorList>
            <person name="Stein L.Y."/>
            <person name="Arp D.J."/>
            <person name="Berube P.M."/>
            <person name="Chain P.S."/>
            <person name="Hauser L."/>
            <person name="Jetten M.S."/>
            <person name="Klotz M.G."/>
            <person name="Larimer F.W."/>
            <person name="Norton J.M."/>
            <person name="Op den Camp H.J.M."/>
            <person name="Shin M."/>
            <person name="Wei X."/>
        </authorList>
    </citation>
    <scope>NUCLEOTIDE SEQUENCE [LARGE SCALE GENOMIC DNA]</scope>
    <source>
        <strain>DSM 101675 / C91 / Nm57</strain>
    </source>
</reference>
<name>RECA_NITEC</name>
<gene>
    <name evidence="1" type="primary">recA</name>
    <name type="ordered locus">Neut_0789</name>
</gene>
<sequence length="343" mass="37367">MDENKNKALTAALAQIEKQYGKGSIMRLGDSDVAKDIQVVSTGSLSLDIALGVGGLPRGRIIEIYGPESSGKTTLTLQVIAEMQKLGGTAAFIDAEHALDPQYAQKIGVNVQELLISQPDNGEQALEITDMLVRSGSVDIVVIDSVAALTPRAEIEGEMGEPQMGLQARLMSQALRKLTANIKRTNTTVIFINQIRMKIGVMFGNPETTTGGNALKFYASVRLDIRRTGSIKRGEEIVGNETRVKVVKNKVAPPFKQADFAILYGEGISRESEIIELGVLHKLIEKAGAWYSYNGEKIGQGRDNVRDYLKEHKDLAHEIEQKIRAAVDLAETNNRTVPPSPSE</sequence>